<feature type="chain" id="PRO_0000374806" description="Ribosomal protein uS12 methylthiotransferase RimO">
    <location>
        <begin position="1"/>
        <end position="444"/>
    </location>
</feature>
<feature type="domain" description="MTTase N-terminal" evidence="1">
    <location>
        <begin position="2"/>
        <end position="118"/>
    </location>
</feature>
<feature type="domain" description="Radical SAM core" evidence="2">
    <location>
        <begin position="142"/>
        <end position="372"/>
    </location>
</feature>
<feature type="domain" description="TRAM" evidence="1">
    <location>
        <begin position="375"/>
        <end position="444"/>
    </location>
</feature>
<feature type="binding site" evidence="1">
    <location>
        <position position="11"/>
    </location>
    <ligand>
        <name>[4Fe-4S] cluster</name>
        <dbReference type="ChEBI" id="CHEBI:49883"/>
        <label>1</label>
    </ligand>
</feature>
<feature type="binding site" evidence="1">
    <location>
        <position position="47"/>
    </location>
    <ligand>
        <name>[4Fe-4S] cluster</name>
        <dbReference type="ChEBI" id="CHEBI:49883"/>
        <label>1</label>
    </ligand>
</feature>
<feature type="binding site" evidence="1">
    <location>
        <position position="81"/>
    </location>
    <ligand>
        <name>[4Fe-4S] cluster</name>
        <dbReference type="ChEBI" id="CHEBI:49883"/>
        <label>1</label>
    </ligand>
</feature>
<feature type="binding site" evidence="1">
    <location>
        <position position="156"/>
    </location>
    <ligand>
        <name>[4Fe-4S] cluster</name>
        <dbReference type="ChEBI" id="CHEBI:49883"/>
        <label>2</label>
        <note>4Fe-4S-S-AdoMet</note>
    </ligand>
</feature>
<feature type="binding site" evidence="1">
    <location>
        <position position="160"/>
    </location>
    <ligand>
        <name>[4Fe-4S] cluster</name>
        <dbReference type="ChEBI" id="CHEBI:49883"/>
        <label>2</label>
        <note>4Fe-4S-S-AdoMet</note>
    </ligand>
</feature>
<feature type="binding site" evidence="1">
    <location>
        <position position="163"/>
    </location>
    <ligand>
        <name>[4Fe-4S] cluster</name>
        <dbReference type="ChEBI" id="CHEBI:49883"/>
        <label>2</label>
        <note>4Fe-4S-S-AdoMet</note>
    </ligand>
</feature>
<gene>
    <name evidence="1" type="primary">rimO</name>
    <name type="ordered locus">Dred_1926</name>
</gene>
<protein>
    <recommendedName>
        <fullName evidence="1">Ribosomal protein uS12 methylthiotransferase RimO</fullName>
        <shortName evidence="1">uS12 MTTase</shortName>
        <shortName evidence="1">uS12 methylthiotransferase</shortName>
        <ecNumber evidence="1">2.8.4.4</ecNumber>
    </recommendedName>
    <alternativeName>
        <fullName evidence="1">Ribosomal protein uS12 (aspartate-C(3))-methylthiotransferase</fullName>
    </alternativeName>
    <alternativeName>
        <fullName evidence="1">Ribosome maturation factor RimO</fullName>
    </alternativeName>
</protein>
<reference key="1">
    <citation type="submission" date="2007-03" db="EMBL/GenBank/DDBJ databases">
        <title>Complete sequence of Desulfotomaculum reducens MI-1.</title>
        <authorList>
            <consortium name="US DOE Joint Genome Institute"/>
            <person name="Copeland A."/>
            <person name="Lucas S."/>
            <person name="Lapidus A."/>
            <person name="Barry K."/>
            <person name="Detter J.C."/>
            <person name="Glavina del Rio T."/>
            <person name="Hammon N."/>
            <person name="Israni S."/>
            <person name="Dalin E."/>
            <person name="Tice H."/>
            <person name="Pitluck S."/>
            <person name="Sims D."/>
            <person name="Brettin T."/>
            <person name="Bruce D."/>
            <person name="Han C."/>
            <person name="Tapia R."/>
            <person name="Schmutz J."/>
            <person name="Larimer F."/>
            <person name="Land M."/>
            <person name="Hauser L."/>
            <person name="Kyrpides N."/>
            <person name="Kim E."/>
            <person name="Tebo B.M."/>
            <person name="Richardson P."/>
        </authorList>
    </citation>
    <scope>NUCLEOTIDE SEQUENCE [LARGE SCALE GENOMIC DNA]</scope>
    <source>
        <strain>ATCC BAA-1160 / DSM 100696 / MI-1</strain>
    </source>
</reference>
<accession>A4J5U4</accession>
<proteinExistence type="inferred from homology"/>
<evidence type="ECO:0000255" key="1">
    <source>
        <dbReference type="HAMAP-Rule" id="MF_01865"/>
    </source>
</evidence>
<evidence type="ECO:0000255" key="2">
    <source>
        <dbReference type="PROSITE-ProRule" id="PRU01266"/>
    </source>
</evidence>
<name>RIMO_DESRM</name>
<organism>
    <name type="scientific">Desulforamulus reducens (strain ATCC BAA-1160 / DSM 100696 / MI-1)</name>
    <name type="common">Desulfotomaculum reducens</name>
    <dbReference type="NCBI Taxonomy" id="349161"/>
    <lineage>
        <taxon>Bacteria</taxon>
        <taxon>Bacillati</taxon>
        <taxon>Bacillota</taxon>
        <taxon>Clostridia</taxon>
        <taxon>Eubacteriales</taxon>
        <taxon>Peptococcaceae</taxon>
        <taxon>Desulforamulus</taxon>
    </lineage>
</organism>
<comment type="function">
    <text evidence="1">Catalyzes the methylthiolation of an aspartic acid residue of ribosomal protein uS12.</text>
</comment>
<comment type="catalytic activity">
    <reaction evidence="1">
        <text>L-aspartate(89)-[ribosomal protein uS12]-hydrogen + (sulfur carrier)-SH + AH2 + 2 S-adenosyl-L-methionine = 3-methylsulfanyl-L-aspartate(89)-[ribosomal protein uS12]-hydrogen + (sulfur carrier)-H + 5'-deoxyadenosine + L-methionine + A + S-adenosyl-L-homocysteine + 2 H(+)</text>
        <dbReference type="Rhea" id="RHEA:37087"/>
        <dbReference type="Rhea" id="RHEA-COMP:10460"/>
        <dbReference type="Rhea" id="RHEA-COMP:10461"/>
        <dbReference type="Rhea" id="RHEA-COMP:14737"/>
        <dbReference type="Rhea" id="RHEA-COMP:14739"/>
        <dbReference type="ChEBI" id="CHEBI:13193"/>
        <dbReference type="ChEBI" id="CHEBI:15378"/>
        <dbReference type="ChEBI" id="CHEBI:17319"/>
        <dbReference type="ChEBI" id="CHEBI:17499"/>
        <dbReference type="ChEBI" id="CHEBI:29917"/>
        <dbReference type="ChEBI" id="CHEBI:29961"/>
        <dbReference type="ChEBI" id="CHEBI:57844"/>
        <dbReference type="ChEBI" id="CHEBI:57856"/>
        <dbReference type="ChEBI" id="CHEBI:59789"/>
        <dbReference type="ChEBI" id="CHEBI:64428"/>
        <dbReference type="ChEBI" id="CHEBI:73599"/>
        <dbReference type="EC" id="2.8.4.4"/>
    </reaction>
</comment>
<comment type="cofactor">
    <cofactor evidence="1">
        <name>[4Fe-4S] cluster</name>
        <dbReference type="ChEBI" id="CHEBI:49883"/>
    </cofactor>
    <text evidence="1">Binds 2 [4Fe-4S] clusters. One cluster is coordinated with 3 cysteines and an exchangeable S-adenosyl-L-methionine.</text>
</comment>
<comment type="subcellular location">
    <subcellularLocation>
        <location evidence="1">Cytoplasm</location>
    </subcellularLocation>
</comment>
<comment type="similarity">
    <text evidence="1">Belongs to the methylthiotransferase family. RimO subfamily.</text>
</comment>
<keyword id="KW-0004">4Fe-4S</keyword>
<keyword id="KW-0963">Cytoplasm</keyword>
<keyword id="KW-0408">Iron</keyword>
<keyword id="KW-0411">Iron-sulfur</keyword>
<keyword id="KW-0479">Metal-binding</keyword>
<keyword id="KW-1185">Reference proteome</keyword>
<keyword id="KW-0949">S-adenosyl-L-methionine</keyword>
<keyword id="KW-0808">Transferase</keyword>
<sequence>MPSIGLLSLGCPKNLVDSEVMLGLLRENNFTITNNEANADALIVNTCGFIESAKEESIRHIFELAQYKERGKCKALIVTGCLAQRYSKELLEEIPEIDVILGPGHVSNIVEVVNHALEGKDRHTRVEDLLYIYDEHSPRLLSTPSYTAYVKIAEGCDNRCAYCAIPDIRGKFRSRPIESIEAEVKDLVEKGVREIILIAQDTTRYGLDLYGEYRLDQLLERLGPIQGLQWIRLLYCYPNRFTDQLIKAMAENPNICKYIDLPMQHAANDILRAMKRPVTKQQARILIQKLRTEIPGIVIRTSFIVGFPGETEEHFKELLDFMEEVKFDRAGVFTYSQEEGTPAAEMPNQIHGRIKQERYHRAMKLQREISLSQNQKRIGQEIEVVVEEVTDQSKGVYTGRSSYDAPEIDGTVEFTSSRPLRIGDFVKVKINRALEYDLMGELAQ</sequence>
<dbReference type="EC" id="2.8.4.4" evidence="1"/>
<dbReference type="EMBL" id="CP000612">
    <property type="protein sequence ID" value="ABO50447.1"/>
    <property type="molecule type" value="Genomic_DNA"/>
</dbReference>
<dbReference type="RefSeq" id="WP_011878258.1">
    <property type="nucleotide sequence ID" value="NC_009253.1"/>
</dbReference>
<dbReference type="SMR" id="A4J5U4"/>
<dbReference type="STRING" id="349161.Dred_1926"/>
<dbReference type="KEGG" id="drm:Dred_1926"/>
<dbReference type="eggNOG" id="COG0621">
    <property type="taxonomic scope" value="Bacteria"/>
</dbReference>
<dbReference type="HOGENOM" id="CLU_018697_0_1_9"/>
<dbReference type="OrthoDB" id="9805215at2"/>
<dbReference type="Proteomes" id="UP000001556">
    <property type="component" value="Chromosome"/>
</dbReference>
<dbReference type="GO" id="GO:0005829">
    <property type="term" value="C:cytosol"/>
    <property type="evidence" value="ECO:0007669"/>
    <property type="project" value="TreeGrafter"/>
</dbReference>
<dbReference type="GO" id="GO:0051539">
    <property type="term" value="F:4 iron, 4 sulfur cluster binding"/>
    <property type="evidence" value="ECO:0007669"/>
    <property type="project" value="UniProtKB-UniRule"/>
</dbReference>
<dbReference type="GO" id="GO:0035599">
    <property type="term" value="F:aspartic acid methylthiotransferase activity"/>
    <property type="evidence" value="ECO:0007669"/>
    <property type="project" value="TreeGrafter"/>
</dbReference>
<dbReference type="GO" id="GO:0046872">
    <property type="term" value="F:metal ion binding"/>
    <property type="evidence" value="ECO:0007669"/>
    <property type="project" value="UniProtKB-KW"/>
</dbReference>
<dbReference type="GO" id="GO:0103039">
    <property type="term" value="F:protein methylthiotransferase activity"/>
    <property type="evidence" value="ECO:0007669"/>
    <property type="project" value="UniProtKB-EC"/>
</dbReference>
<dbReference type="GO" id="GO:0006400">
    <property type="term" value="P:tRNA modification"/>
    <property type="evidence" value="ECO:0007669"/>
    <property type="project" value="InterPro"/>
</dbReference>
<dbReference type="CDD" id="cd01335">
    <property type="entry name" value="Radical_SAM"/>
    <property type="match status" value="1"/>
</dbReference>
<dbReference type="FunFam" id="3.80.30.20:FF:000001">
    <property type="entry name" value="tRNA-2-methylthio-N(6)-dimethylallyladenosine synthase 2"/>
    <property type="match status" value="1"/>
</dbReference>
<dbReference type="Gene3D" id="3.40.50.12160">
    <property type="entry name" value="Methylthiotransferase, N-terminal domain"/>
    <property type="match status" value="1"/>
</dbReference>
<dbReference type="Gene3D" id="2.40.50.140">
    <property type="entry name" value="Nucleic acid-binding proteins"/>
    <property type="match status" value="1"/>
</dbReference>
<dbReference type="Gene3D" id="3.80.30.20">
    <property type="entry name" value="tm_1862 like domain"/>
    <property type="match status" value="1"/>
</dbReference>
<dbReference type="HAMAP" id="MF_01865">
    <property type="entry name" value="MTTase_RimO"/>
    <property type="match status" value="1"/>
</dbReference>
<dbReference type="InterPro" id="IPR006638">
    <property type="entry name" value="Elp3/MiaA/NifB-like_rSAM"/>
</dbReference>
<dbReference type="InterPro" id="IPR005839">
    <property type="entry name" value="Methylthiotransferase"/>
</dbReference>
<dbReference type="InterPro" id="IPR020612">
    <property type="entry name" value="Methylthiotransferase_CS"/>
</dbReference>
<dbReference type="InterPro" id="IPR013848">
    <property type="entry name" value="Methylthiotransferase_N"/>
</dbReference>
<dbReference type="InterPro" id="IPR038135">
    <property type="entry name" value="Methylthiotransferase_N_sf"/>
</dbReference>
<dbReference type="InterPro" id="IPR012340">
    <property type="entry name" value="NA-bd_OB-fold"/>
</dbReference>
<dbReference type="InterPro" id="IPR005840">
    <property type="entry name" value="Ribosomal_uS12_MeSTrfase_RimO"/>
</dbReference>
<dbReference type="InterPro" id="IPR007197">
    <property type="entry name" value="rSAM"/>
</dbReference>
<dbReference type="InterPro" id="IPR023404">
    <property type="entry name" value="rSAM_horseshoe"/>
</dbReference>
<dbReference type="InterPro" id="IPR002792">
    <property type="entry name" value="TRAM_dom"/>
</dbReference>
<dbReference type="NCBIfam" id="TIGR01125">
    <property type="entry name" value="30S ribosomal protein S12 methylthiotransferase RimO"/>
    <property type="match status" value="1"/>
</dbReference>
<dbReference type="NCBIfam" id="TIGR00089">
    <property type="entry name" value="MiaB/RimO family radical SAM methylthiotransferase"/>
    <property type="match status" value="1"/>
</dbReference>
<dbReference type="PANTHER" id="PTHR43837">
    <property type="entry name" value="RIBOSOMAL PROTEIN S12 METHYLTHIOTRANSFERASE RIMO"/>
    <property type="match status" value="1"/>
</dbReference>
<dbReference type="PANTHER" id="PTHR43837:SF1">
    <property type="entry name" value="RIBOSOMAL PROTEIN US12 METHYLTHIOTRANSFERASE RIMO"/>
    <property type="match status" value="1"/>
</dbReference>
<dbReference type="Pfam" id="PF04055">
    <property type="entry name" value="Radical_SAM"/>
    <property type="match status" value="1"/>
</dbReference>
<dbReference type="Pfam" id="PF18693">
    <property type="entry name" value="TRAM_2"/>
    <property type="match status" value="1"/>
</dbReference>
<dbReference type="Pfam" id="PF00919">
    <property type="entry name" value="UPF0004"/>
    <property type="match status" value="1"/>
</dbReference>
<dbReference type="SFLD" id="SFLDG01082">
    <property type="entry name" value="B12-binding_domain_containing"/>
    <property type="match status" value="1"/>
</dbReference>
<dbReference type="SFLD" id="SFLDG01061">
    <property type="entry name" value="methylthiotransferase"/>
    <property type="match status" value="1"/>
</dbReference>
<dbReference type="SFLD" id="SFLDF00274">
    <property type="entry name" value="ribosomal_protein_S12_methylth"/>
    <property type="match status" value="1"/>
</dbReference>
<dbReference type="SMART" id="SM00729">
    <property type="entry name" value="Elp3"/>
    <property type="match status" value="1"/>
</dbReference>
<dbReference type="SUPFAM" id="SSF102114">
    <property type="entry name" value="Radical SAM enzymes"/>
    <property type="match status" value="1"/>
</dbReference>
<dbReference type="PROSITE" id="PS51449">
    <property type="entry name" value="MTTASE_N"/>
    <property type="match status" value="1"/>
</dbReference>
<dbReference type="PROSITE" id="PS01278">
    <property type="entry name" value="MTTASE_RADICAL"/>
    <property type="match status" value="1"/>
</dbReference>
<dbReference type="PROSITE" id="PS51918">
    <property type="entry name" value="RADICAL_SAM"/>
    <property type="match status" value="1"/>
</dbReference>
<dbReference type="PROSITE" id="PS50926">
    <property type="entry name" value="TRAM"/>
    <property type="match status" value="1"/>
</dbReference>